<name>MEH_CHLAA</name>
<evidence type="ECO:0000269" key="1">
    <source>
    </source>
</evidence>
<evidence type="ECO:0000305" key="2"/>
<organism>
    <name type="scientific">Chloroflexus aurantiacus (strain ATCC 29366 / DSM 635 / J-10-fl)</name>
    <dbReference type="NCBI Taxonomy" id="324602"/>
    <lineage>
        <taxon>Bacteria</taxon>
        <taxon>Bacillati</taxon>
        <taxon>Chloroflexota</taxon>
        <taxon>Chloroflexia</taxon>
        <taxon>Chloroflexales</taxon>
        <taxon>Chloroflexineae</taxon>
        <taxon>Chloroflexaceae</taxon>
        <taxon>Chloroflexus</taxon>
    </lineage>
</organism>
<accession>A9WC41</accession>
<keyword id="KW-0120">Carbon dioxide fixation</keyword>
<keyword id="KW-0456">Lyase</keyword>
<keyword id="KW-1185">Reference proteome</keyword>
<dbReference type="EC" id="4.2.1.153"/>
<dbReference type="EMBL" id="CP000909">
    <property type="protein sequence ID" value="ABY33434.1"/>
    <property type="molecule type" value="Genomic_DNA"/>
</dbReference>
<dbReference type="RefSeq" id="WP_012256090.1">
    <property type="nucleotide sequence ID" value="NC_010175.1"/>
</dbReference>
<dbReference type="RefSeq" id="YP_001633823.1">
    <property type="nucleotide sequence ID" value="NC_010175.1"/>
</dbReference>
<dbReference type="SMR" id="A9WC41"/>
<dbReference type="STRING" id="324602.Caur_0180"/>
<dbReference type="EnsemblBacteria" id="ABY33434">
    <property type="protein sequence ID" value="ABY33434"/>
    <property type="gene ID" value="Caur_0180"/>
</dbReference>
<dbReference type="KEGG" id="cau:Caur_0180"/>
<dbReference type="PATRIC" id="fig|324602.8.peg.209"/>
<dbReference type="eggNOG" id="COG3777">
    <property type="taxonomic scope" value="Bacteria"/>
</dbReference>
<dbReference type="HOGENOM" id="CLU_028690_3_0_0"/>
<dbReference type="InParanoid" id="A9WC41"/>
<dbReference type="BioCyc" id="MetaCyc:MONOMER-17294"/>
<dbReference type="BRENDA" id="4.2.1.153">
    <property type="organism ID" value="1352"/>
</dbReference>
<dbReference type="Proteomes" id="UP000002008">
    <property type="component" value="Chromosome"/>
</dbReference>
<dbReference type="GO" id="GO:0019171">
    <property type="term" value="F:(3R)-hydroxyacyl-[acyl-carrier-protein] dehydratase activity"/>
    <property type="evidence" value="ECO:0000318"/>
    <property type="project" value="GO_Central"/>
</dbReference>
<dbReference type="GO" id="GO:0015977">
    <property type="term" value="P:carbon fixation"/>
    <property type="evidence" value="ECO:0007669"/>
    <property type="project" value="UniProtKB-KW"/>
</dbReference>
<dbReference type="Gene3D" id="3.10.129.10">
    <property type="entry name" value="Hotdog Thioesterase"/>
    <property type="match status" value="2"/>
</dbReference>
<dbReference type="InterPro" id="IPR029069">
    <property type="entry name" value="HotDog_dom_sf"/>
</dbReference>
<dbReference type="InterPro" id="IPR052741">
    <property type="entry name" value="Mitochondrial_HTD2"/>
</dbReference>
<dbReference type="PANTHER" id="PTHR28152">
    <property type="entry name" value="HYDROXYACYL-THIOESTER DEHYDRATASE TYPE 2, MITOCHONDRIAL"/>
    <property type="match status" value="1"/>
</dbReference>
<dbReference type="PANTHER" id="PTHR28152:SF1">
    <property type="entry name" value="HYDROXYACYL-THIOESTER DEHYDRATASE TYPE 2, MITOCHONDRIAL"/>
    <property type="match status" value="1"/>
</dbReference>
<dbReference type="SUPFAM" id="SSF54637">
    <property type="entry name" value="Thioesterase/thiol ester dehydrase-isomerase"/>
    <property type="match status" value="2"/>
</dbReference>
<feature type="chain" id="PRO_0000430342" description="Mesaconyl-C(4)-CoA hydratase">
    <location>
        <begin position="1"/>
        <end position="280"/>
    </location>
</feature>
<comment type="function">
    <text evidence="1">Involved in the glyoxylate assimilation cycle used to regenerate acetyl-CoA and produce pyruvate as universal precursor for biosynthesis. Catalyzes the hydration of 3-methylfumaryl-CoA (mesaconyl-C4-CoA) to (3S)-citramalyl-CoA.</text>
</comment>
<comment type="catalytic activity">
    <reaction evidence="1">
        <text>(3S)-citramalyl-CoA = 3-methylfumaryl-CoA + H2O</text>
        <dbReference type="Rhea" id="RHEA:38271"/>
        <dbReference type="ChEBI" id="CHEBI:15377"/>
        <dbReference type="ChEBI" id="CHEBI:58668"/>
        <dbReference type="ChEBI" id="CHEBI:75636"/>
        <dbReference type="EC" id="4.2.1.153"/>
    </reaction>
</comment>
<comment type="activity regulation">
    <text evidence="1">Inhibited by 3-methylfumaryl-CoA concentrations above 0.3 mM.</text>
</comment>
<comment type="biophysicochemical properties">
    <kinetics>
        <KM evidence="1">75 uM for 3-methylfumaryl-CoA (at 45 degrees Celsius)</KM>
        <text>kcat is 1045 sec(-1) for hydratase activity with 3-methylfumaryl-CoA (at 45 degrees Celsius).</text>
    </kinetics>
</comment>
<comment type="subunit">
    <text evidence="1">Homodimer.</text>
</comment>
<comment type="similarity">
    <text evidence="2">Belongs to the HTD2 family.</text>
</comment>
<gene>
    <name type="primary">meh</name>
    <name type="ordered locus">Caur_0180</name>
</gene>
<reference key="1">
    <citation type="journal article" date="2011" name="BMC Genomics">
        <title>Complete genome sequence of the filamentous anoxygenic phototrophic bacterium Chloroflexus aurantiacus.</title>
        <authorList>
            <person name="Tang K.H."/>
            <person name="Barry K."/>
            <person name="Chertkov O."/>
            <person name="Dalin E."/>
            <person name="Han C.S."/>
            <person name="Hauser L.J."/>
            <person name="Honchak B.M."/>
            <person name="Karbach L.E."/>
            <person name="Land M.L."/>
            <person name="Lapidus A."/>
            <person name="Larimer F.W."/>
            <person name="Mikhailova N."/>
            <person name="Pitluck S."/>
            <person name="Pierson B.K."/>
            <person name="Blankenship R.E."/>
        </authorList>
    </citation>
    <scope>NUCLEOTIDE SEQUENCE [LARGE SCALE GENOMIC DNA]</scope>
    <source>
        <strain>ATCC 29366 / DSM 635 / J-10-fl</strain>
    </source>
</reference>
<reference key="2">
    <citation type="journal article" date="2009" name="Proc. Natl. Acad. Sci. U.S.A.">
        <title>Identifying the missing steps of the autotrophic 3-hydroxypropionate CO2 fixation cycle in Chloroflexus aurantiacus.</title>
        <authorList>
            <person name="Zarzycki J."/>
            <person name="Brecht V."/>
            <person name="Muller M."/>
            <person name="Fuchs G."/>
        </authorList>
    </citation>
    <scope>FUNCTION</scope>
    <scope>CATALYTIC ACTIVITY</scope>
    <scope>BIOPHYSICOCHEMICAL PROPERTIES</scope>
    <scope>ACTIVITY REGULATION</scope>
    <scope>SUBUNIT</scope>
    <source>
        <strain>DSM 636 / Ok-70-fl</strain>
    </source>
</reference>
<sequence>MSSADWMAWIGRTEQVEDDICLAQAIAAAATLEPPSGAPTADSPLPPLWHWFYFLPRAPQSQLSSDGHPQRGGFIPPIPYPRRMFAGARIRFHHPLRIGQPARREGVIRNITQKSGRSGPLAFVTVGYQIYQHEMLCIEEEQDIVYREPGAPVPAPTPVELPPVHDAITRTVVPDPRLLFRFSALTFNAHRIHYDRPYAQHEEGYPGLVVHGPLVAVLLMELARHHTSRPIVGFSFRSQAPLFDLAPFRLLARPNGDRIDLEAQGPDGATALSATVELGG</sequence>
<proteinExistence type="evidence at protein level"/>
<protein>
    <recommendedName>
        <fullName>Mesaconyl-C(4)-CoA hydratase</fullName>
        <ecNumber>4.2.1.153</ecNumber>
    </recommendedName>
    <alternativeName>
        <fullName>3-methylfumaryl-CoA hydratase</fullName>
    </alternativeName>
</protein>